<proteinExistence type="inferred from homology"/>
<sequence>MTDIFEVPTPDNELLEKAKQLRLASIKTSQTNNDDRIRALNLMADYLEKNSKEIIEANIEDYKKAEIKGISKSLLSRLKLSKEKLNLGIEGVRQVGNLIDPVGQIQIKRELSKGLILERKTVPIGVLGVIFESRPDAVMQISSLAIRSGNGVMLKGGSEANLTNLAIVSALKEGLQDSNLDENAICLLTSRKDSMAMLNLEKYINLIIPRGSNELVKFIQENTEIPVLGHADGICHLYIDNEVNLDMALKVALDSKIQYPAACNAVETLLIHKDTASEFLNKAIPMFNSNDVKLIGDKKSFQLGVAFEANYEDWQTEYLDLILSIKIVNDLEEAIAHIQKFSSKHTDGIITENINNANKFMSEIDSSGVFHNCSTRFADGFRYGFGAEVGISTQTLPPRGPVGLEGLVTYKYFLRGEGHIVDDFSSGKLIYSHKDV</sequence>
<protein>
    <recommendedName>
        <fullName evidence="1">Gamma-glutamyl phosphate reductase</fullName>
        <shortName evidence="1">GPR</shortName>
        <ecNumber evidence="1">1.2.1.41</ecNumber>
    </recommendedName>
    <alternativeName>
        <fullName evidence="1">Glutamate-5-semialdehyde dehydrogenase</fullName>
    </alternativeName>
    <alternativeName>
        <fullName evidence="1">Glutamyl-gamma-semialdehyde dehydrogenase</fullName>
        <shortName evidence="1">GSA dehydrogenase</shortName>
    </alternativeName>
</protein>
<evidence type="ECO:0000255" key="1">
    <source>
        <dbReference type="HAMAP-Rule" id="MF_00412"/>
    </source>
</evidence>
<keyword id="KW-0028">Amino-acid biosynthesis</keyword>
<keyword id="KW-0963">Cytoplasm</keyword>
<keyword id="KW-0521">NADP</keyword>
<keyword id="KW-0560">Oxidoreductase</keyword>
<keyword id="KW-0641">Proline biosynthesis</keyword>
<comment type="function">
    <text evidence="1">Catalyzes the NADPH-dependent reduction of L-glutamate 5-phosphate into L-glutamate 5-semialdehyde and phosphate. The product spontaneously undergoes cyclization to form 1-pyrroline-5-carboxylate.</text>
</comment>
<comment type="catalytic activity">
    <reaction evidence="1">
        <text>L-glutamate 5-semialdehyde + phosphate + NADP(+) = L-glutamyl 5-phosphate + NADPH + H(+)</text>
        <dbReference type="Rhea" id="RHEA:19541"/>
        <dbReference type="ChEBI" id="CHEBI:15378"/>
        <dbReference type="ChEBI" id="CHEBI:43474"/>
        <dbReference type="ChEBI" id="CHEBI:57783"/>
        <dbReference type="ChEBI" id="CHEBI:58066"/>
        <dbReference type="ChEBI" id="CHEBI:58274"/>
        <dbReference type="ChEBI" id="CHEBI:58349"/>
        <dbReference type="EC" id="1.2.1.41"/>
    </reaction>
</comment>
<comment type="pathway">
    <text evidence="1">Amino-acid biosynthesis; L-proline biosynthesis; L-glutamate 5-semialdehyde from L-glutamate: step 2/2.</text>
</comment>
<comment type="subcellular location">
    <subcellularLocation>
        <location evidence="1">Cytoplasm</location>
    </subcellularLocation>
</comment>
<comment type="similarity">
    <text evidence="1">Belongs to the gamma-glutamyl phosphate reductase family.</text>
</comment>
<organism>
    <name type="scientific">Prochlorococcus marinus subsp. pastoris (strain CCMP1986 / NIES-2087 / MED4)</name>
    <dbReference type="NCBI Taxonomy" id="59919"/>
    <lineage>
        <taxon>Bacteria</taxon>
        <taxon>Bacillati</taxon>
        <taxon>Cyanobacteriota</taxon>
        <taxon>Cyanophyceae</taxon>
        <taxon>Synechococcales</taxon>
        <taxon>Prochlorococcaceae</taxon>
        <taxon>Prochlorococcus</taxon>
    </lineage>
</organism>
<dbReference type="EC" id="1.2.1.41" evidence="1"/>
<dbReference type="EMBL" id="BX548174">
    <property type="protein sequence ID" value="CAE19049.1"/>
    <property type="molecule type" value="Genomic_DNA"/>
</dbReference>
<dbReference type="RefSeq" id="WP_011132224.1">
    <property type="nucleotide sequence ID" value="NC_005072.1"/>
</dbReference>
<dbReference type="SMR" id="Q7V293"/>
<dbReference type="STRING" id="59919.PMM0590"/>
<dbReference type="KEGG" id="pmm:PMM0590"/>
<dbReference type="eggNOG" id="COG0014">
    <property type="taxonomic scope" value="Bacteria"/>
</dbReference>
<dbReference type="HOGENOM" id="CLU_030231_0_1_3"/>
<dbReference type="OrthoDB" id="9809970at2"/>
<dbReference type="UniPathway" id="UPA00098">
    <property type="reaction ID" value="UER00360"/>
</dbReference>
<dbReference type="Proteomes" id="UP000001026">
    <property type="component" value="Chromosome"/>
</dbReference>
<dbReference type="GO" id="GO:0005737">
    <property type="term" value="C:cytoplasm"/>
    <property type="evidence" value="ECO:0007669"/>
    <property type="project" value="UniProtKB-SubCell"/>
</dbReference>
<dbReference type="GO" id="GO:0004350">
    <property type="term" value="F:glutamate-5-semialdehyde dehydrogenase activity"/>
    <property type="evidence" value="ECO:0007669"/>
    <property type="project" value="UniProtKB-UniRule"/>
</dbReference>
<dbReference type="GO" id="GO:0050661">
    <property type="term" value="F:NADP binding"/>
    <property type="evidence" value="ECO:0007669"/>
    <property type="project" value="InterPro"/>
</dbReference>
<dbReference type="GO" id="GO:0055129">
    <property type="term" value="P:L-proline biosynthetic process"/>
    <property type="evidence" value="ECO:0007669"/>
    <property type="project" value="UniProtKB-UniRule"/>
</dbReference>
<dbReference type="CDD" id="cd07079">
    <property type="entry name" value="ALDH_F18-19_ProA-GPR"/>
    <property type="match status" value="1"/>
</dbReference>
<dbReference type="FunFam" id="3.40.309.10:FF:000006">
    <property type="entry name" value="Gamma-glutamyl phosphate reductase"/>
    <property type="match status" value="1"/>
</dbReference>
<dbReference type="Gene3D" id="3.40.605.10">
    <property type="entry name" value="Aldehyde Dehydrogenase, Chain A, domain 1"/>
    <property type="match status" value="1"/>
</dbReference>
<dbReference type="Gene3D" id="3.40.309.10">
    <property type="entry name" value="Aldehyde Dehydrogenase, Chain A, domain 2"/>
    <property type="match status" value="1"/>
</dbReference>
<dbReference type="HAMAP" id="MF_00412">
    <property type="entry name" value="ProA"/>
    <property type="match status" value="1"/>
</dbReference>
<dbReference type="InterPro" id="IPR016161">
    <property type="entry name" value="Ald_DH/histidinol_DH"/>
</dbReference>
<dbReference type="InterPro" id="IPR016163">
    <property type="entry name" value="Ald_DH_C"/>
</dbReference>
<dbReference type="InterPro" id="IPR016162">
    <property type="entry name" value="Ald_DH_N"/>
</dbReference>
<dbReference type="InterPro" id="IPR015590">
    <property type="entry name" value="Aldehyde_DH_dom"/>
</dbReference>
<dbReference type="InterPro" id="IPR020593">
    <property type="entry name" value="G-glutamylP_reductase_CS"/>
</dbReference>
<dbReference type="InterPro" id="IPR012134">
    <property type="entry name" value="Glu-5-SA_DH"/>
</dbReference>
<dbReference type="InterPro" id="IPR000965">
    <property type="entry name" value="GPR_dom"/>
</dbReference>
<dbReference type="NCBIfam" id="NF001221">
    <property type="entry name" value="PRK00197.1"/>
    <property type="match status" value="1"/>
</dbReference>
<dbReference type="NCBIfam" id="TIGR00407">
    <property type="entry name" value="proA"/>
    <property type="match status" value="1"/>
</dbReference>
<dbReference type="PANTHER" id="PTHR11063:SF8">
    <property type="entry name" value="DELTA-1-PYRROLINE-5-CARBOXYLATE SYNTHASE"/>
    <property type="match status" value="1"/>
</dbReference>
<dbReference type="PANTHER" id="PTHR11063">
    <property type="entry name" value="GLUTAMATE SEMIALDEHYDE DEHYDROGENASE"/>
    <property type="match status" value="1"/>
</dbReference>
<dbReference type="Pfam" id="PF00171">
    <property type="entry name" value="Aldedh"/>
    <property type="match status" value="1"/>
</dbReference>
<dbReference type="PIRSF" id="PIRSF000151">
    <property type="entry name" value="GPR"/>
    <property type="match status" value="1"/>
</dbReference>
<dbReference type="SUPFAM" id="SSF53720">
    <property type="entry name" value="ALDH-like"/>
    <property type="match status" value="1"/>
</dbReference>
<dbReference type="PROSITE" id="PS01223">
    <property type="entry name" value="PROA"/>
    <property type="match status" value="1"/>
</dbReference>
<accession>Q7V293</accession>
<reference key="1">
    <citation type="journal article" date="2003" name="Nature">
        <title>Genome divergence in two Prochlorococcus ecotypes reflects oceanic niche differentiation.</title>
        <authorList>
            <person name="Rocap G."/>
            <person name="Larimer F.W."/>
            <person name="Lamerdin J.E."/>
            <person name="Malfatti S."/>
            <person name="Chain P."/>
            <person name="Ahlgren N.A."/>
            <person name="Arellano A."/>
            <person name="Coleman M."/>
            <person name="Hauser L."/>
            <person name="Hess W.R."/>
            <person name="Johnson Z.I."/>
            <person name="Land M.L."/>
            <person name="Lindell D."/>
            <person name="Post A.F."/>
            <person name="Regala W."/>
            <person name="Shah M."/>
            <person name="Shaw S.L."/>
            <person name="Steglich C."/>
            <person name="Sullivan M.B."/>
            <person name="Ting C.S."/>
            <person name="Tolonen A."/>
            <person name="Webb E.A."/>
            <person name="Zinser E.R."/>
            <person name="Chisholm S.W."/>
        </authorList>
    </citation>
    <scope>NUCLEOTIDE SEQUENCE [LARGE SCALE GENOMIC DNA]</scope>
    <source>
        <strain>CCMP1986 / NIES-2087 / MED4</strain>
    </source>
</reference>
<gene>
    <name evidence="1" type="primary">proA</name>
    <name type="ordered locus">PMM0590</name>
</gene>
<feature type="chain" id="PRO_0000189766" description="Gamma-glutamyl phosphate reductase">
    <location>
        <begin position="1"/>
        <end position="436"/>
    </location>
</feature>
<name>PROA_PROMP</name>